<accession>Q1RJQ1</accession>
<reference key="1">
    <citation type="journal article" date="2006" name="PLoS Genet.">
        <title>Genome sequence of Rickettsia bellii illuminates the role of amoebae in gene exchanges between intracellular pathogens.</title>
        <authorList>
            <person name="Ogata H."/>
            <person name="La Scola B."/>
            <person name="Audic S."/>
            <person name="Renesto P."/>
            <person name="Blanc G."/>
            <person name="Robert C."/>
            <person name="Fournier P.-E."/>
            <person name="Claverie J.-M."/>
            <person name="Raoult D."/>
        </authorList>
    </citation>
    <scope>NUCLEOTIDE SEQUENCE [LARGE SCALE GENOMIC DNA]</scope>
    <source>
        <strain>RML369-C</strain>
    </source>
</reference>
<sequence>MTITQVKVKKLDNFFGKLPEYATDHSAGMDLTAANEQPITIKAGEIQLIPTGIAIALPELFEAQIRPRSGLAAKNGITVANSPGTIDADYRGEIKVILINLGKDDFVIEKGMRIAQMVISKYERISWKESETLEETARGSGGFGSTGVYL</sequence>
<organism>
    <name type="scientific">Rickettsia bellii (strain RML369-C)</name>
    <dbReference type="NCBI Taxonomy" id="336407"/>
    <lineage>
        <taxon>Bacteria</taxon>
        <taxon>Pseudomonadati</taxon>
        <taxon>Pseudomonadota</taxon>
        <taxon>Alphaproteobacteria</taxon>
        <taxon>Rickettsiales</taxon>
        <taxon>Rickettsiaceae</taxon>
        <taxon>Rickettsieae</taxon>
        <taxon>Rickettsia</taxon>
        <taxon>belli group</taxon>
    </lineage>
</organism>
<gene>
    <name evidence="1" type="primary">dut</name>
    <name type="ordered locus">RBE_0332</name>
</gene>
<proteinExistence type="inferred from homology"/>
<feature type="chain" id="PRO_0000277878" description="Deoxyuridine 5'-triphosphate nucleotidohydrolase">
    <location>
        <begin position="1"/>
        <end position="150"/>
    </location>
</feature>
<feature type="binding site" evidence="1">
    <location>
        <begin position="68"/>
        <end position="70"/>
    </location>
    <ligand>
        <name>substrate</name>
    </ligand>
</feature>
<feature type="binding site" evidence="1">
    <location>
        <position position="81"/>
    </location>
    <ligand>
        <name>substrate</name>
    </ligand>
</feature>
<feature type="binding site" evidence="1">
    <location>
        <begin position="85"/>
        <end position="87"/>
    </location>
    <ligand>
        <name>substrate</name>
    </ligand>
</feature>
<feature type="binding site" evidence="1">
    <location>
        <position position="95"/>
    </location>
    <ligand>
        <name>substrate</name>
    </ligand>
</feature>
<evidence type="ECO:0000255" key="1">
    <source>
        <dbReference type="HAMAP-Rule" id="MF_00116"/>
    </source>
</evidence>
<comment type="function">
    <text evidence="1">This enzyme is involved in nucleotide metabolism: it produces dUMP, the immediate precursor of thymidine nucleotides and it decreases the intracellular concentration of dUTP so that uracil cannot be incorporated into DNA.</text>
</comment>
<comment type="catalytic activity">
    <reaction evidence="1">
        <text>dUTP + H2O = dUMP + diphosphate + H(+)</text>
        <dbReference type="Rhea" id="RHEA:10248"/>
        <dbReference type="ChEBI" id="CHEBI:15377"/>
        <dbReference type="ChEBI" id="CHEBI:15378"/>
        <dbReference type="ChEBI" id="CHEBI:33019"/>
        <dbReference type="ChEBI" id="CHEBI:61555"/>
        <dbReference type="ChEBI" id="CHEBI:246422"/>
        <dbReference type="EC" id="3.6.1.23"/>
    </reaction>
</comment>
<comment type="cofactor">
    <cofactor evidence="1">
        <name>Mg(2+)</name>
        <dbReference type="ChEBI" id="CHEBI:18420"/>
    </cofactor>
</comment>
<comment type="pathway">
    <text evidence="1">Pyrimidine metabolism; dUMP biosynthesis; dUMP from dCTP (dUTP route): step 2/2.</text>
</comment>
<comment type="similarity">
    <text evidence="1">Belongs to the dUTPase family.</text>
</comment>
<protein>
    <recommendedName>
        <fullName evidence="1">Deoxyuridine 5'-triphosphate nucleotidohydrolase</fullName>
        <shortName evidence="1">dUTPase</shortName>
        <ecNumber evidence="1">3.6.1.23</ecNumber>
    </recommendedName>
    <alternativeName>
        <fullName evidence="1">dUTP pyrophosphatase</fullName>
    </alternativeName>
</protein>
<dbReference type="EC" id="3.6.1.23" evidence="1"/>
<dbReference type="EMBL" id="CP000087">
    <property type="protein sequence ID" value="ABE04413.1"/>
    <property type="molecule type" value="Genomic_DNA"/>
</dbReference>
<dbReference type="RefSeq" id="WP_011477024.1">
    <property type="nucleotide sequence ID" value="NC_007940.1"/>
</dbReference>
<dbReference type="SMR" id="Q1RJQ1"/>
<dbReference type="KEGG" id="rbe:RBE_0332"/>
<dbReference type="eggNOG" id="COG0756">
    <property type="taxonomic scope" value="Bacteria"/>
</dbReference>
<dbReference type="HOGENOM" id="CLU_068508_1_2_5"/>
<dbReference type="OrthoDB" id="9809956at2"/>
<dbReference type="UniPathway" id="UPA00610">
    <property type="reaction ID" value="UER00666"/>
</dbReference>
<dbReference type="Proteomes" id="UP000001951">
    <property type="component" value="Chromosome"/>
</dbReference>
<dbReference type="GO" id="GO:0004170">
    <property type="term" value="F:dUTP diphosphatase activity"/>
    <property type="evidence" value="ECO:0007669"/>
    <property type="project" value="UniProtKB-UniRule"/>
</dbReference>
<dbReference type="GO" id="GO:0000287">
    <property type="term" value="F:magnesium ion binding"/>
    <property type="evidence" value="ECO:0007669"/>
    <property type="project" value="UniProtKB-UniRule"/>
</dbReference>
<dbReference type="GO" id="GO:0006226">
    <property type="term" value="P:dUMP biosynthetic process"/>
    <property type="evidence" value="ECO:0007669"/>
    <property type="project" value="UniProtKB-UniRule"/>
</dbReference>
<dbReference type="GO" id="GO:0046081">
    <property type="term" value="P:dUTP catabolic process"/>
    <property type="evidence" value="ECO:0007669"/>
    <property type="project" value="InterPro"/>
</dbReference>
<dbReference type="CDD" id="cd07557">
    <property type="entry name" value="trimeric_dUTPase"/>
    <property type="match status" value="1"/>
</dbReference>
<dbReference type="FunFam" id="2.70.40.10:FF:000002">
    <property type="entry name" value="dUTP diphosphatase"/>
    <property type="match status" value="1"/>
</dbReference>
<dbReference type="Gene3D" id="2.70.40.10">
    <property type="match status" value="1"/>
</dbReference>
<dbReference type="HAMAP" id="MF_00116">
    <property type="entry name" value="dUTPase_bact"/>
    <property type="match status" value="1"/>
</dbReference>
<dbReference type="InterPro" id="IPR008181">
    <property type="entry name" value="dUTPase"/>
</dbReference>
<dbReference type="InterPro" id="IPR029054">
    <property type="entry name" value="dUTPase-like"/>
</dbReference>
<dbReference type="InterPro" id="IPR036157">
    <property type="entry name" value="dUTPase-like_sf"/>
</dbReference>
<dbReference type="InterPro" id="IPR033704">
    <property type="entry name" value="dUTPase_trimeric"/>
</dbReference>
<dbReference type="NCBIfam" id="TIGR00576">
    <property type="entry name" value="dut"/>
    <property type="match status" value="1"/>
</dbReference>
<dbReference type="NCBIfam" id="NF001862">
    <property type="entry name" value="PRK00601.1"/>
    <property type="match status" value="1"/>
</dbReference>
<dbReference type="PANTHER" id="PTHR11241">
    <property type="entry name" value="DEOXYURIDINE 5'-TRIPHOSPHATE NUCLEOTIDOHYDROLASE"/>
    <property type="match status" value="1"/>
</dbReference>
<dbReference type="PANTHER" id="PTHR11241:SF0">
    <property type="entry name" value="DEOXYURIDINE 5'-TRIPHOSPHATE NUCLEOTIDOHYDROLASE"/>
    <property type="match status" value="1"/>
</dbReference>
<dbReference type="Pfam" id="PF00692">
    <property type="entry name" value="dUTPase"/>
    <property type="match status" value="1"/>
</dbReference>
<dbReference type="SUPFAM" id="SSF51283">
    <property type="entry name" value="dUTPase-like"/>
    <property type="match status" value="1"/>
</dbReference>
<name>DUT_RICBR</name>
<keyword id="KW-0378">Hydrolase</keyword>
<keyword id="KW-0460">Magnesium</keyword>
<keyword id="KW-0479">Metal-binding</keyword>
<keyword id="KW-0546">Nucleotide metabolism</keyword>